<proteinExistence type="evidence at protein level"/>
<dbReference type="PIR" id="A05136">
    <property type="entry name" value="A05136"/>
</dbReference>
<dbReference type="SMR" id="P04099"/>
<dbReference type="GO" id="GO:0005576">
    <property type="term" value="C:extracellular region"/>
    <property type="evidence" value="ECO:0007669"/>
    <property type="project" value="UniProtKB-SubCell"/>
</dbReference>
<dbReference type="GO" id="GO:0019871">
    <property type="term" value="F:sodium channel inhibitor activity"/>
    <property type="evidence" value="ECO:0007669"/>
    <property type="project" value="InterPro"/>
</dbReference>
<dbReference type="GO" id="GO:0090729">
    <property type="term" value="F:toxin activity"/>
    <property type="evidence" value="ECO:0007669"/>
    <property type="project" value="UniProtKB-KW"/>
</dbReference>
<dbReference type="GO" id="GO:0006952">
    <property type="term" value="P:defense response"/>
    <property type="evidence" value="ECO:0007669"/>
    <property type="project" value="InterPro"/>
</dbReference>
<dbReference type="CDD" id="cd23106">
    <property type="entry name" value="neurotoxins_LC_scorpion"/>
    <property type="match status" value="1"/>
</dbReference>
<dbReference type="Gene3D" id="3.30.30.10">
    <property type="entry name" value="Knottin, scorpion toxin-like"/>
    <property type="match status" value="1"/>
</dbReference>
<dbReference type="InterPro" id="IPR044062">
    <property type="entry name" value="LCN-type_CS_alpha_beta_dom"/>
</dbReference>
<dbReference type="InterPro" id="IPR003614">
    <property type="entry name" value="Scorpion_toxin-like"/>
</dbReference>
<dbReference type="InterPro" id="IPR036574">
    <property type="entry name" value="Scorpion_toxin-like_sf"/>
</dbReference>
<dbReference type="InterPro" id="IPR018218">
    <property type="entry name" value="Scorpion_toxinL"/>
</dbReference>
<dbReference type="InterPro" id="IPR002061">
    <property type="entry name" value="Scorpion_toxinL/defensin"/>
</dbReference>
<dbReference type="Pfam" id="PF00537">
    <property type="entry name" value="Toxin_3"/>
    <property type="match status" value="1"/>
</dbReference>
<dbReference type="PRINTS" id="PR00285">
    <property type="entry name" value="SCORPNTOXIN"/>
</dbReference>
<dbReference type="SMART" id="SM00505">
    <property type="entry name" value="Knot1"/>
    <property type="match status" value="1"/>
</dbReference>
<dbReference type="SUPFAM" id="SSF57095">
    <property type="entry name" value="Scorpion toxin-like"/>
    <property type="match status" value="1"/>
</dbReference>
<dbReference type="PROSITE" id="PS51863">
    <property type="entry name" value="LCN_CSAB"/>
    <property type="match status" value="1"/>
</dbReference>
<evidence type="ECO:0000255" key="1">
    <source>
        <dbReference type="PROSITE-ProRule" id="PRU01210"/>
    </source>
</evidence>
<evidence type="ECO:0000269" key="2">
    <source>
    </source>
</evidence>
<evidence type="ECO:0000269" key="3">
    <source>
    </source>
</evidence>
<evidence type="ECO:0000303" key="4">
    <source>
    </source>
</evidence>
<evidence type="ECO:0000303" key="5">
    <source>
    </source>
</evidence>
<evidence type="ECO:0000305" key="6"/>
<evidence type="ECO:0000305" key="7">
    <source>
    </source>
</evidence>
<accession>P04099</accession>
<keyword id="KW-0903">Direct protein sequencing</keyword>
<keyword id="KW-1015">Disulfide bond</keyword>
<keyword id="KW-0872">Ion channel impairing toxin</keyword>
<keyword id="KW-0528">Neurotoxin</keyword>
<keyword id="KW-0964">Secreted</keyword>
<keyword id="KW-0800">Toxin</keyword>
<keyword id="KW-0738">Voltage-gated sodium channel impairing toxin</keyword>
<name>SCX9_BUTOC</name>
<comment type="function">
    <text evidence="2">Alpha toxins bind voltage-independently at site-3 of sodium channels (Nav) and inhibit the inactivation of the activated channels, thereby blocking neuronal transmission. This toxin is active against rat Nav1.2/SCN2A and B.germanica Nav1.</text>
</comment>
<comment type="subcellular location">
    <subcellularLocation>
        <location evidence="2 3">Secreted</location>
    </subcellularLocation>
</comment>
<comment type="tissue specificity">
    <text evidence="7">Expressed by the venom gland.</text>
</comment>
<comment type="domain">
    <text evidence="6">Has the structural arrangement of an alpha-helix connected to antiparallel beta-sheets by disulfide bonds (CS-alpha/beta).</text>
</comment>
<comment type="mass spectrometry" mass="7985.61" error="0.11" method="Electrospray" evidence="2"/>
<comment type="toxic dose">
    <text evidence="2">LD(50) is 100 ng/kg by subcutaneous injection in mice.</text>
</comment>
<comment type="similarity">
    <text evidence="6">Belongs to the long (4 C-C) scorpion toxin superfamily. Sodium channel inhibitor family. Alpha subfamily.</text>
</comment>
<organism>
    <name type="scientific">Buthus occitanus tunetanus</name>
    <name type="common">Common European scorpion</name>
    <name type="synonym">Buthus tunetanus</name>
    <dbReference type="NCBI Taxonomy" id="6871"/>
    <lineage>
        <taxon>Eukaryota</taxon>
        <taxon>Metazoa</taxon>
        <taxon>Ecdysozoa</taxon>
        <taxon>Arthropoda</taxon>
        <taxon>Chelicerata</taxon>
        <taxon>Arachnida</taxon>
        <taxon>Scorpiones</taxon>
        <taxon>Buthida</taxon>
        <taxon>Buthoidea</taxon>
        <taxon>Buthidae</taxon>
        <taxon>Buthus</taxon>
    </lineage>
</organism>
<sequence length="70" mass="7998">AEIKVRDGYIVYPNNCVYHCGLNPYCNDLCTKNGAKSGYCQWLTKWGNACYCYALPEKVPIKDPSYKCYS</sequence>
<feature type="chain" id="PRO_0000066737" description="Alpha-toxin Bot9" evidence="2">
    <location>
        <begin position="1"/>
        <end position="70"/>
    </location>
</feature>
<feature type="domain" description="LCN-type CS-alpha/beta" evidence="1">
    <location>
        <begin position="6"/>
        <end position="69"/>
    </location>
</feature>
<feature type="disulfide bond" evidence="1">
    <location>
        <begin position="16"/>
        <end position="68"/>
    </location>
</feature>
<feature type="disulfide bond" evidence="1">
    <location>
        <begin position="20"/>
        <end position="40"/>
    </location>
</feature>
<feature type="disulfide bond" evidence="1">
    <location>
        <begin position="26"/>
        <end position="50"/>
    </location>
</feature>
<feature type="disulfide bond" evidence="1">
    <location>
        <begin position="30"/>
        <end position="52"/>
    </location>
</feature>
<feature type="sequence conflict" description="In Ref. 2; AA sequence." evidence="6" ref="2">
    <original>N</original>
    <variation>D</variation>
    <location>
        <position position="23"/>
    </location>
</feature>
<feature type="sequence conflict" description="In Ref. 2; AA sequence." evidence="6" ref="2">
    <location>
        <begin position="32"/>
        <end position="33"/>
    </location>
</feature>
<protein>
    <recommendedName>
        <fullName evidence="4">Alpha-toxin Bot9</fullName>
    </recommendedName>
    <alternativeName>
        <fullName evidence="4">BotIX</fullName>
    </alternativeName>
    <alternativeName>
        <fullName evidence="6">Neurotoxin 9</fullName>
    </alternativeName>
    <alternativeName>
        <fullName evidence="6">Neurotoxin IX</fullName>
    </alternativeName>
</protein>
<reference key="1">
    <citation type="journal article" date="2016" name="FEBS Lett.">
        <title>The scorpion toxin Bot IX is a potent member of the alpha-like family and has a unique N-terminal sequence extension.</title>
        <authorList>
            <person name="Martin-Eauclaire M.F."/>
            <person name="Salvatierra J."/>
            <person name="Bosmans F."/>
            <person name="Bougis P.E."/>
        </authorList>
    </citation>
    <scope>PROTEIN SEQUENCE</scope>
    <scope>FUNCTION</scope>
    <scope>SUBCELLULAR LOCATION</scope>
    <scope>MASS SPECTROMETRY</scope>
    <scope>TOXIC DOSE</scope>
    <source>
        <tissue evidence="4">Venom</tissue>
    </source>
</reference>
<reference key="2">
    <citation type="journal article" date="1984" name="Toxicon">
        <title>Purification of thirteen toxins active on mice from the venom of the North African scorpion Buthus occitanus tunetanus.</title>
        <authorList>
            <person name="Martin M.-F."/>
            <person name="Rochat H."/>
        </authorList>
    </citation>
    <scope>PROTEIN SEQUENCE OF 1-35</scope>
    <scope>SUBCELLULAR LOCATION</scope>
    <source>
        <tissue evidence="5">Venom</tissue>
    </source>
</reference>